<proteinExistence type="inferred from homology"/>
<sequence length="450" mass="50793">MKRKKHVLHQILSEKRKAERIRGGNMSAKDEFGTTKYIIYAEFEANGVVERPDVVGAIFGQTEGLLGDDLDLRELQKTGRIGRIRVEVHTKAGKTYGTITVPSSLDRVETAILAAALETIDRVGPAEAHIKVLRIEDVRATKRKYIIERAKEILETLMEEEIPETQELTEEVKKAVRAKELIEYGPEKLPAGPHVPFSDSIIVVEGRADVLNLLKHGIKNAIAVEGTSIPETIIKLSKERIVTAFTDGDRGGELILKELLQVADVDYVARAPEGKEVEELTKKEIVKALRSKIPAEQVITEMFHKGKNFYEILKEKERTAPSKEVKPAPKHEPKPQPVEQKPREEKIIRPIQQAKSPEIEKFEKFIERVKKEQTAILLDENMNVIAEIPVRDLLTTISTRDNIYAIVFNGIITQRLIDIVSENNVRYLVGARKANVVRRPVNLKILTFAE</sequence>
<gene>
    <name evidence="1" type="primary">dnaG</name>
    <name type="ordered locus">TGAM_1776</name>
</gene>
<keyword id="KW-0235">DNA replication</keyword>
<keyword id="KW-0240">DNA-directed RNA polymerase</keyword>
<keyword id="KW-0271">Exosome</keyword>
<keyword id="KW-0460">Magnesium</keyword>
<keyword id="KW-0479">Metal-binding</keyword>
<keyword id="KW-0548">Nucleotidyltransferase</keyword>
<keyword id="KW-0639">Primosome</keyword>
<keyword id="KW-1185">Reference proteome</keyword>
<keyword id="KW-0804">Transcription</keyword>
<keyword id="KW-0808">Transferase</keyword>
<name>DNAG_THEGJ</name>
<reference key="1">
    <citation type="journal article" date="2007" name="Genome Biol.">
        <title>Genome analysis and genome-wide proteomics of Thermococcus gammatolerans, the most radioresistant organism known amongst the Archaea.</title>
        <authorList>
            <person name="Zivanovic Y."/>
            <person name="Armengaud J."/>
            <person name="Lagorce A."/>
            <person name="Leplat C."/>
            <person name="Guerin P."/>
            <person name="Dutertre M."/>
            <person name="Anthouard V."/>
            <person name="Forterre P."/>
            <person name="Wincker P."/>
            <person name="Confalonieri F."/>
        </authorList>
    </citation>
    <scope>NUCLEOTIDE SEQUENCE [LARGE SCALE GENOMIC DNA]</scope>
    <source>
        <strain>DSM 15229 / JCM 11827 / EJ3</strain>
    </source>
</reference>
<accession>C5A1K9</accession>
<organism>
    <name type="scientific">Thermococcus gammatolerans (strain DSM 15229 / JCM 11827 / EJ3)</name>
    <dbReference type="NCBI Taxonomy" id="593117"/>
    <lineage>
        <taxon>Archaea</taxon>
        <taxon>Methanobacteriati</taxon>
        <taxon>Methanobacteriota</taxon>
        <taxon>Thermococci</taxon>
        <taxon>Thermococcales</taxon>
        <taxon>Thermococcaceae</taxon>
        <taxon>Thermococcus</taxon>
    </lineage>
</organism>
<feature type="chain" id="PRO_1000201714" description="DNA primase DnaG">
    <location>
        <begin position="1"/>
        <end position="450"/>
    </location>
</feature>
<feature type="domain" description="Toprim" evidence="1">
    <location>
        <begin position="199"/>
        <end position="273"/>
    </location>
</feature>
<feature type="region of interest" description="Disordered" evidence="2">
    <location>
        <begin position="320"/>
        <end position="350"/>
    </location>
</feature>
<feature type="compositionally biased region" description="Basic and acidic residues" evidence="2">
    <location>
        <begin position="320"/>
        <end position="348"/>
    </location>
</feature>
<feature type="binding site" evidence="1">
    <location>
        <position position="205"/>
    </location>
    <ligand>
        <name>Mg(2+)</name>
        <dbReference type="ChEBI" id="CHEBI:18420"/>
        <label>1</label>
        <note>catalytic</note>
    </ligand>
</feature>
<feature type="binding site" evidence="1">
    <location>
        <position position="247"/>
    </location>
    <ligand>
        <name>Mg(2+)</name>
        <dbReference type="ChEBI" id="CHEBI:18420"/>
        <label>1</label>
        <note>catalytic</note>
    </ligand>
</feature>
<feature type="binding site" evidence="1">
    <location>
        <position position="247"/>
    </location>
    <ligand>
        <name>Mg(2+)</name>
        <dbReference type="ChEBI" id="CHEBI:18420"/>
        <label>2</label>
    </ligand>
</feature>
<feature type="binding site" evidence="1">
    <location>
        <position position="249"/>
    </location>
    <ligand>
        <name>Mg(2+)</name>
        <dbReference type="ChEBI" id="CHEBI:18420"/>
        <label>2</label>
    </ligand>
</feature>
<evidence type="ECO:0000255" key="1">
    <source>
        <dbReference type="HAMAP-Rule" id="MF_00007"/>
    </source>
</evidence>
<evidence type="ECO:0000256" key="2">
    <source>
        <dbReference type="SAM" id="MobiDB-lite"/>
    </source>
</evidence>
<dbReference type="EC" id="2.7.7.101" evidence="1"/>
<dbReference type="EMBL" id="CP001398">
    <property type="protein sequence ID" value="ACS34278.1"/>
    <property type="molecule type" value="Genomic_DNA"/>
</dbReference>
<dbReference type="RefSeq" id="WP_015859387.1">
    <property type="nucleotide sequence ID" value="NC_012804.1"/>
</dbReference>
<dbReference type="SMR" id="C5A1K9"/>
<dbReference type="STRING" id="593117.TGAM_1776"/>
<dbReference type="PaxDb" id="593117-TGAM_1776"/>
<dbReference type="GeneID" id="7987495"/>
<dbReference type="KEGG" id="tga:TGAM_1776"/>
<dbReference type="PATRIC" id="fig|593117.10.peg.1784"/>
<dbReference type="eggNOG" id="arCOG04281">
    <property type="taxonomic scope" value="Archaea"/>
</dbReference>
<dbReference type="HOGENOM" id="CLU_034626_0_0_2"/>
<dbReference type="OrthoDB" id="8643at2157"/>
<dbReference type="Proteomes" id="UP000001488">
    <property type="component" value="Chromosome"/>
</dbReference>
<dbReference type="GO" id="GO:0005737">
    <property type="term" value="C:cytoplasm"/>
    <property type="evidence" value="ECO:0007669"/>
    <property type="project" value="TreeGrafter"/>
</dbReference>
<dbReference type="GO" id="GO:0000428">
    <property type="term" value="C:DNA-directed RNA polymerase complex"/>
    <property type="evidence" value="ECO:0007669"/>
    <property type="project" value="UniProtKB-KW"/>
</dbReference>
<dbReference type="GO" id="GO:0000178">
    <property type="term" value="C:exosome (RNase complex)"/>
    <property type="evidence" value="ECO:0007669"/>
    <property type="project" value="UniProtKB-KW"/>
</dbReference>
<dbReference type="GO" id="GO:1990077">
    <property type="term" value="C:primosome complex"/>
    <property type="evidence" value="ECO:0007669"/>
    <property type="project" value="UniProtKB-KW"/>
</dbReference>
<dbReference type="GO" id="GO:0003899">
    <property type="term" value="F:DNA-directed RNA polymerase activity"/>
    <property type="evidence" value="ECO:0007669"/>
    <property type="project" value="InterPro"/>
</dbReference>
<dbReference type="GO" id="GO:0046872">
    <property type="term" value="F:metal ion binding"/>
    <property type="evidence" value="ECO:0007669"/>
    <property type="project" value="UniProtKB-KW"/>
</dbReference>
<dbReference type="GO" id="GO:0008143">
    <property type="term" value="F:poly(A) binding"/>
    <property type="evidence" value="ECO:0007669"/>
    <property type="project" value="InterPro"/>
</dbReference>
<dbReference type="GO" id="GO:0006269">
    <property type="term" value="P:DNA replication, synthesis of primer"/>
    <property type="evidence" value="ECO:0007669"/>
    <property type="project" value="UniProtKB-UniRule"/>
</dbReference>
<dbReference type="CDD" id="cd01029">
    <property type="entry name" value="TOPRIM_primases"/>
    <property type="match status" value="1"/>
</dbReference>
<dbReference type="FunFam" id="3.40.1360.10:FF:000010">
    <property type="entry name" value="DNA primase DnaG"/>
    <property type="match status" value="1"/>
</dbReference>
<dbReference type="Gene3D" id="3.40.1360.10">
    <property type="match status" value="1"/>
</dbReference>
<dbReference type="HAMAP" id="MF_00007">
    <property type="entry name" value="DNA_primase_DnaG_arc"/>
    <property type="match status" value="1"/>
</dbReference>
<dbReference type="InterPro" id="IPR050219">
    <property type="entry name" value="DnaG_primase"/>
</dbReference>
<dbReference type="InterPro" id="IPR020607">
    <property type="entry name" value="Primase_DnaG_arc"/>
</dbReference>
<dbReference type="InterPro" id="IPR034154">
    <property type="entry name" value="TOPRIM_DnaG/twinkle"/>
</dbReference>
<dbReference type="InterPro" id="IPR006171">
    <property type="entry name" value="TOPRIM_dom"/>
</dbReference>
<dbReference type="NCBIfam" id="NF003108">
    <property type="entry name" value="PRK04031.1-1"/>
    <property type="match status" value="1"/>
</dbReference>
<dbReference type="PANTHER" id="PTHR30313">
    <property type="entry name" value="DNA PRIMASE"/>
    <property type="match status" value="1"/>
</dbReference>
<dbReference type="PANTHER" id="PTHR30313:SF2">
    <property type="entry name" value="DNA PRIMASE"/>
    <property type="match status" value="1"/>
</dbReference>
<dbReference type="Pfam" id="PF13662">
    <property type="entry name" value="Toprim_4"/>
    <property type="match status" value="1"/>
</dbReference>
<dbReference type="SMART" id="SM00493">
    <property type="entry name" value="TOPRIM"/>
    <property type="match status" value="1"/>
</dbReference>
<dbReference type="SUPFAM" id="SSF56731">
    <property type="entry name" value="DNA primase core"/>
    <property type="match status" value="1"/>
</dbReference>
<dbReference type="PROSITE" id="PS50880">
    <property type="entry name" value="TOPRIM"/>
    <property type="match status" value="1"/>
</dbReference>
<protein>
    <recommendedName>
        <fullName evidence="1">DNA primase DnaG</fullName>
        <ecNumber evidence="1">2.7.7.101</ecNumber>
    </recommendedName>
</protein>
<comment type="function">
    <text evidence="1">RNA polymerase that catalyzes the synthesis of short RNA molecules used as primers for DNA polymerase during DNA replication. Also part of the exosome, which is a complex involved in RNA degradation. Acts as a poly(A)-binding protein that enhances the interaction between heteromeric, adenine-rich transcripts and the exosome.</text>
</comment>
<comment type="catalytic activity">
    <reaction evidence="1">
        <text>ssDNA + n NTP = ssDNA/pppN(pN)n-1 hybrid + (n-1) diphosphate.</text>
        <dbReference type="EC" id="2.7.7.101"/>
    </reaction>
</comment>
<comment type="cofactor">
    <cofactor evidence="1">
        <name>Mg(2+)</name>
        <dbReference type="ChEBI" id="CHEBI:18420"/>
    </cofactor>
    <text evidence="1">Binds two Mg(2+) per subunit.</text>
</comment>
<comment type="subunit">
    <text evidence="1">Forms a ternary complex with MCM helicase and DNA. Component of the archaeal exosome complex.</text>
</comment>
<comment type="similarity">
    <text evidence="1">Belongs to the archaeal DnaG primase family.</text>
</comment>